<gene>
    <name type="primary">ispE</name>
    <name type="ordered locus">SAK_0216</name>
</gene>
<sequence length="283" mass="31047">MKIFEKAPAKLNLGLDIKGRCDDGYHELAMIMVSIDLNDYVTISELKEDCIVIDSDSSKMPLNNDNDVFKAADIIKNQYGINKGVHIRLEKSIPVCAGLGGGSTDAAATIRALNRLWNLQMDYDEMVAIGFKIGSDVPYCLGGGCSLVLGKGEIVKPLPTLRPCWIVLVKPDFGISTKSIFRDIDCKSISRVDIDLLKSAILSSDYQLMVKSMGNSLEDITITKNPVISTIKERMLNSGADVALMTGSGPTVFSMCSTEKKADRVFNSMKGFCKEVYKVRLLR</sequence>
<reference key="1">
    <citation type="journal article" date="2005" name="Proc. Natl. Acad. Sci. U.S.A.">
        <title>Genome analysis of multiple pathogenic isolates of Streptococcus agalactiae: implications for the microbial 'pan-genome'.</title>
        <authorList>
            <person name="Tettelin H."/>
            <person name="Masignani V."/>
            <person name="Cieslewicz M.J."/>
            <person name="Donati C."/>
            <person name="Medini D."/>
            <person name="Ward N.L."/>
            <person name="Angiuoli S.V."/>
            <person name="Crabtree J."/>
            <person name="Jones A.L."/>
            <person name="Durkin A.S."/>
            <person name="DeBoy R.T."/>
            <person name="Davidsen T.M."/>
            <person name="Mora M."/>
            <person name="Scarselli M."/>
            <person name="Margarit y Ros I."/>
            <person name="Peterson J.D."/>
            <person name="Hauser C.R."/>
            <person name="Sundaram J.P."/>
            <person name="Nelson W.C."/>
            <person name="Madupu R."/>
            <person name="Brinkac L.M."/>
            <person name="Dodson R.J."/>
            <person name="Rosovitz M.J."/>
            <person name="Sullivan S.A."/>
            <person name="Daugherty S.C."/>
            <person name="Haft D.H."/>
            <person name="Selengut J."/>
            <person name="Gwinn M.L."/>
            <person name="Zhou L."/>
            <person name="Zafar N."/>
            <person name="Khouri H."/>
            <person name="Radune D."/>
            <person name="Dimitrov G."/>
            <person name="Watkins K."/>
            <person name="O'Connor K.J."/>
            <person name="Smith S."/>
            <person name="Utterback T.R."/>
            <person name="White O."/>
            <person name="Rubens C.E."/>
            <person name="Grandi G."/>
            <person name="Madoff L.C."/>
            <person name="Kasper D.L."/>
            <person name="Telford J.L."/>
            <person name="Wessels M.R."/>
            <person name="Rappuoli R."/>
            <person name="Fraser C.M."/>
        </authorList>
    </citation>
    <scope>NUCLEOTIDE SEQUENCE [LARGE SCALE GENOMIC DNA]</scope>
    <source>
        <strain>ATCC 27591 / A909 / CDC SS700</strain>
    </source>
</reference>
<evidence type="ECO:0000255" key="1">
    <source>
        <dbReference type="HAMAP-Rule" id="MF_00061"/>
    </source>
</evidence>
<feature type="chain" id="PRO_0000235138" description="Putative 4-diphosphocytidyl-2-C-methyl-D-erythritol kinase">
    <location>
        <begin position="1"/>
        <end position="283"/>
    </location>
</feature>
<feature type="active site" evidence="1">
    <location>
        <position position="10"/>
    </location>
</feature>
<feature type="active site" evidence="1">
    <location>
        <position position="136"/>
    </location>
</feature>
<feature type="binding site" evidence="1">
    <location>
        <begin position="94"/>
        <end position="104"/>
    </location>
    <ligand>
        <name>ATP</name>
        <dbReference type="ChEBI" id="CHEBI:30616"/>
    </ligand>
</feature>
<organism>
    <name type="scientific">Streptococcus agalactiae serotype Ia (strain ATCC 27591 / A909 / CDC SS700)</name>
    <dbReference type="NCBI Taxonomy" id="205921"/>
    <lineage>
        <taxon>Bacteria</taxon>
        <taxon>Bacillati</taxon>
        <taxon>Bacillota</taxon>
        <taxon>Bacilli</taxon>
        <taxon>Lactobacillales</taxon>
        <taxon>Streptococcaceae</taxon>
        <taxon>Streptococcus</taxon>
    </lineage>
</organism>
<accession>Q3K3L9</accession>
<dbReference type="EC" id="2.7.1.148" evidence="1"/>
<dbReference type="EMBL" id="CP000114">
    <property type="protein sequence ID" value="ABA45272.1"/>
    <property type="molecule type" value="Genomic_DNA"/>
</dbReference>
<dbReference type="RefSeq" id="WP_000688172.1">
    <property type="nucleotide sequence ID" value="NC_007432.1"/>
</dbReference>
<dbReference type="SMR" id="Q3K3L9"/>
<dbReference type="KEGG" id="sak:SAK_0216"/>
<dbReference type="HOGENOM" id="CLU_053057_1_1_9"/>
<dbReference type="GO" id="GO:0050515">
    <property type="term" value="F:4-(cytidine 5'-diphospho)-2-C-methyl-D-erythritol kinase activity"/>
    <property type="evidence" value="ECO:0007669"/>
    <property type="project" value="UniProtKB-UniRule"/>
</dbReference>
<dbReference type="GO" id="GO:0005524">
    <property type="term" value="F:ATP binding"/>
    <property type="evidence" value="ECO:0007669"/>
    <property type="project" value="UniProtKB-UniRule"/>
</dbReference>
<dbReference type="GO" id="GO:0016114">
    <property type="term" value="P:terpenoid biosynthetic process"/>
    <property type="evidence" value="ECO:0007669"/>
    <property type="project" value="InterPro"/>
</dbReference>
<dbReference type="Gene3D" id="3.30.230.10">
    <property type="match status" value="1"/>
</dbReference>
<dbReference type="Gene3D" id="3.30.70.890">
    <property type="entry name" value="GHMP kinase, C-terminal domain"/>
    <property type="match status" value="1"/>
</dbReference>
<dbReference type="HAMAP" id="MF_00061">
    <property type="entry name" value="IspE"/>
    <property type="match status" value="1"/>
</dbReference>
<dbReference type="InterPro" id="IPR013750">
    <property type="entry name" value="GHMP_kinase_C_dom"/>
</dbReference>
<dbReference type="InterPro" id="IPR036554">
    <property type="entry name" value="GHMP_kinase_C_sf"/>
</dbReference>
<dbReference type="InterPro" id="IPR006204">
    <property type="entry name" value="GHMP_kinase_N_dom"/>
</dbReference>
<dbReference type="InterPro" id="IPR004424">
    <property type="entry name" value="IspE"/>
</dbReference>
<dbReference type="InterPro" id="IPR020568">
    <property type="entry name" value="Ribosomal_Su5_D2-typ_SF"/>
</dbReference>
<dbReference type="InterPro" id="IPR014721">
    <property type="entry name" value="Ribsml_uS5_D2-typ_fold_subgr"/>
</dbReference>
<dbReference type="NCBIfam" id="TIGR00154">
    <property type="entry name" value="ispE"/>
    <property type="match status" value="1"/>
</dbReference>
<dbReference type="PANTHER" id="PTHR43527">
    <property type="entry name" value="4-DIPHOSPHOCYTIDYL-2-C-METHYL-D-ERYTHRITOL KINASE, CHLOROPLASTIC"/>
    <property type="match status" value="1"/>
</dbReference>
<dbReference type="PANTHER" id="PTHR43527:SF2">
    <property type="entry name" value="4-DIPHOSPHOCYTIDYL-2-C-METHYL-D-ERYTHRITOL KINASE, CHLOROPLASTIC"/>
    <property type="match status" value="1"/>
</dbReference>
<dbReference type="Pfam" id="PF08544">
    <property type="entry name" value="GHMP_kinases_C"/>
    <property type="match status" value="1"/>
</dbReference>
<dbReference type="Pfam" id="PF00288">
    <property type="entry name" value="GHMP_kinases_N"/>
    <property type="match status" value="1"/>
</dbReference>
<dbReference type="PIRSF" id="PIRSF010376">
    <property type="entry name" value="IspE"/>
    <property type="match status" value="1"/>
</dbReference>
<dbReference type="SUPFAM" id="SSF55060">
    <property type="entry name" value="GHMP Kinase, C-terminal domain"/>
    <property type="match status" value="1"/>
</dbReference>
<dbReference type="SUPFAM" id="SSF54211">
    <property type="entry name" value="Ribosomal protein S5 domain 2-like"/>
    <property type="match status" value="1"/>
</dbReference>
<comment type="function">
    <text evidence="1">Catalyzes the phosphorylation of the position 2 hydroxy group of 4-diphosphocytidyl-2C-methyl-D-erythritol.</text>
</comment>
<comment type="catalytic activity">
    <reaction evidence="1">
        <text>4-CDP-2-C-methyl-D-erythritol + ATP = 4-CDP-2-C-methyl-D-erythritol 2-phosphate + ADP + H(+)</text>
        <dbReference type="Rhea" id="RHEA:18437"/>
        <dbReference type="ChEBI" id="CHEBI:15378"/>
        <dbReference type="ChEBI" id="CHEBI:30616"/>
        <dbReference type="ChEBI" id="CHEBI:57823"/>
        <dbReference type="ChEBI" id="CHEBI:57919"/>
        <dbReference type="ChEBI" id="CHEBI:456216"/>
        <dbReference type="EC" id="2.7.1.148"/>
    </reaction>
</comment>
<comment type="similarity">
    <text evidence="1">Belongs to the GHMP kinase family. IspE subfamily.</text>
</comment>
<protein>
    <recommendedName>
        <fullName evidence="1">Putative 4-diphosphocytidyl-2-C-methyl-D-erythritol kinase</fullName>
        <shortName evidence="1">CMK</shortName>
        <ecNumber evidence="1">2.7.1.148</ecNumber>
    </recommendedName>
    <alternativeName>
        <fullName evidence="1">4-(cytidine-5'-diphospho)-2-C-methyl-D-erythritol kinase</fullName>
    </alternativeName>
</protein>
<proteinExistence type="inferred from homology"/>
<keyword id="KW-0067">ATP-binding</keyword>
<keyword id="KW-0418">Kinase</keyword>
<keyword id="KW-0547">Nucleotide-binding</keyword>
<keyword id="KW-0808">Transferase</keyword>
<name>ISPE_STRA1</name>